<protein>
    <recommendedName>
        <fullName evidence="1">Uronate isomerase</fullName>
        <ecNumber evidence="1">5.3.1.12</ecNumber>
    </recommendedName>
    <alternativeName>
        <fullName evidence="1">Glucuronate isomerase</fullName>
    </alternativeName>
    <alternativeName>
        <fullName evidence="1">Uronic isomerase</fullName>
    </alternativeName>
</protein>
<reference key="1">
    <citation type="journal article" date="2011" name="J. Bacteriol.">
        <title>Genome sequence of the verrucomicrobium Opitutus terrae PB90-1, an abundant inhabitant of rice paddy soil ecosystems.</title>
        <authorList>
            <person name="van Passel M.W."/>
            <person name="Kant R."/>
            <person name="Palva A."/>
            <person name="Copeland A."/>
            <person name="Lucas S."/>
            <person name="Lapidus A."/>
            <person name="Glavina del Rio T."/>
            <person name="Pitluck S."/>
            <person name="Goltsman E."/>
            <person name="Clum A."/>
            <person name="Sun H."/>
            <person name="Schmutz J."/>
            <person name="Larimer F.W."/>
            <person name="Land M.L."/>
            <person name="Hauser L."/>
            <person name="Kyrpides N."/>
            <person name="Mikhailova N."/>
            <person name="Richardson P.P."/>
            <person name="Janssen P.H."/>
            <person name="de Vos W.M."/>
            <person name="Smidt H."/>
        </authorList>
    </citation>
    <scope>NUCLEOTIDE SEQUENCE [LARGE SCALE GENOMIC DNA]</scope>
    <source>
        <strain>DSM 11246 / JCM 15787 / PB90-1</strain>
    </source>
</reference>
<comment type="catalytic activity">
    <reaction evidence="1">
        <text>D-glucuronate = D-fructuronate</text>
        <dbReference type="Rhea" id="RHEA:13049"/>
        <dbReference type="ChEBI" id="CHEBI:58720"/>
        <dbReference type="ChEBI" id="CHEBI:59863"/>
        <dbReference type="EC" id="5.3.1.12"/>
    </reaction>
</comment>
<comment type="catalytic activity">
    <reaction evidence="1">
        <text>aldehydo-D-galacturonate = keto-D-tagaturonate</text>
        <dbReference type="Rhea" id="RHEA:27702"/>
        <dbReference type="ChEBI" id="CHEBI:12952"/>
        <dbReference type="ChEBI" id="CHEBI:17886"/>
        <dbReference type="EC" id="5.3.1.12"/>
    </reaction>
</comment>
<comment type="pathway">
    <text evidence="1">Carbohydrate metabolism; pentose and glucuronate interconversion.</text>
</comment>
<comment type="similarity">
    <text evidence="1">Belongs to the metallo-dependent hydrolases superfamily. Uronate isomerase family.</text>
</comment>
<organism>
    <name type="scientific">Opitutus terrae (strain DSM 11246 / JCM 15787 / PB90-1)</name>
    <dbReference type="NCBI Taxonomy" id="452637"/>
    <lineage>
        <taxon>Bacteria</taxon>
        <taxon>Pseudomonadati</taxon>
        <taxon>Verrucomicrobiota</taxon>
        <taxon>Opitutia</taxon>
        <taxon>Opitutales</taxon>
        <taxon>Opitutaceae</taxon>
        <taxon>Opitutus</taxon>
    </lineage>
</organism>
<evidence type="ECO:0000255" key="1">
    <source>
        <dbReference type="HAMAP-Rule" id="MF_00675"/>
    </source>
</evidence>
<dbReference type="EC" id="5.3.1.12" evidence="1"/>
<dbReference type="EMBL" id="CP001032">
    <property type="protein sequence ID" value="ACB77566.1"/>
    <property type="molecule type" value="Genomic_DNA"/>
</dbReference>
<dbReference type="RefSeq" id="WP_012377092.1">
    <property type="nucleotide sequence ID" value="NC_010571.1"/>
</dbReference>
<dbReference type="SMR" id="B1ZP77"/>
<dbReference type="STRING" id="452637.Oter_4293"/>
<dbReference type="KEGG" id="ote:Oter_4293"/>
<dbReference type="eggNOG" id="COG1904">
    <property type="taxonomic scope" value="Bacteria"/>
</dbReference>
<dbReference type="HOGENOM" id="CLU_044465_1_0_0"/>
<dbReference type="OrthoDB" id="9766564at2"/>
<dbReference type="UniPathway" id="UPA00246"/>
<dbReference type="Proteomes" id="UP000007013">
    <property type="component" value="Chromosome"/>
</dbReference>
<dbReference type="GO" id="GO:0008880">
    <property type="term" value="F:glucuronate isomerase activity"/>
    <property type="evidence" value="ECO:0007669"/>
    <property type="project" value="UniProtKB-UniRule"/>
</dbReference>
<dbReference type="GO" id="GO:0019698">
    <property type="term" value="P:D-galacturonate catabolic process"/>
    <property type="evidence" value="ECO:0007669"/>
    <property type="project" value="TreeGrafter"/>
</dbReference>
<dbReference type="GO" id="GO:0042840">
    <property type="term" value="P:D-glucuronate catabolic process"/>
    <property type="evidence" value="ECO:0007669"/>
    <property type="project" value="TreeGrafter"/>
</dbReference>
<dbReference type="Gene3D" id="3.20.20.140">
    <property type="entry name" value="Metal-dependent hydrolases"/>
    <property type="match status" value="1"/>
</dbReference>
<dbReference type="Gene3D" id="1.10.2020.10">
    <property type="entry name" value="uronate isomerase, domain 2, chain A"/>
    <property type="match status" value="1"/>
</dbReference>
<dbReference type="HAMAP" id="MF_00675">
    <property type="entry name" value="UxaC"/>
    <property type="match status" value="1"/>
</dbReference>
<dbReference type="InterPro" id="IPR032466">
    <property type="entry name" value="Metal_Hydrolase"/>
</dbReference>
<dbReference type="InterPro" id="IPR003766">
    <property type="entry name" value="Uronate_isomerase"/>
</dbReference>
<dbReference type="NCBIfam" id="NF002794">
    <property type="entry name" value="PRK02925.1"/>
    <property type="match status" value="1"/>
</dbReference>
<dbReference type="PANTHER" id="PTHR30068">
    <property type="entry name" value="URONATE ISOMERASE"/>
    <property type="match status" value="1"/>
</dbReference>
<dbReference type="PANTHER" id="PTHR30068:SF4">
    <property type="entry name" value="URONATE ISOMERASE"/>
    <property type="match status" value="1"/>
</dbReference>
<dbReference type="Pfam" id="PF02614">
    <property type="entry name" value="UxaC"/>
    <property type="match status" value="1"/>
</dbReference>
<dbReference type="SUPFAM" id="SSF51556">
    <property type="entry name" value="Metallo-dependent hydrolases"/>
    <property type="match status" value="1"/>
</dbReference>
<accession>B1ZP77</accession>
<name>UXAC_OPITP</name>
<gene>
    <name evidence="1" type="primary">uxaC</name>
    <name type="ordered locus">Oter_4293</name>
</gene>
<keyword id="KW-0413">Isomerase</keyword>
<keyword id="KW-1185">Reference proteome</keyword>
<sequence>MRPFIHDDFLLHTDAARDLYHSFAKAEPIFDYHCHLPQQQILENHQFADLAEIWLGGDHYKWRAMRANGVKERFCTGAATPREKFDAWVGAVPHTLRNPLYHWSHLELARYFGIFDLINQKSADKIWREANEKLATMRVHDILAANKVAVICTTDDPADSLEQHEKIKKLGIKTRVYPTFRPDKALNVGSPAAYNAWLEKLAGAAKTKIASFDDFLSALKKRHDDFHAIGGRLSDHGMENCYAEPCTATEAQAIFDAARAGRAASVADQAKFASFMMLEFGRWDAKKGWTKQLHLGALRNNNTRLLATLGPDTGFDSIGDFPQTRALSRYLDTLDSTDELPRTVLYNLNPADNYAFATMIGNFQDGSVPGKMQFGSGWWFLDQKEAMEWQMNALSNQGLLSRFVGMLTDSRSFLSYTRHEYFRRTLCNLIGAEMERGEIPNDRELVGPMVRRICFANAREYFRLELDPSFRG</sequence>
<proteinExistence type="inferred from homology"/>
<feature type="chain" id="PRO_1000131598" description="Uronate isomerase">
    <location>
        <begin position="1"/>
        <end position="472"/>
    </location>
</feature>